<gene>
    <name evidence="1" type="primary">mRRF2</name>
    <name evidence="1" type="synonym">EF-G2</name>
    <name type="ORF">GA16055</name>
</gene>
<accession>Q29BD5</accession>
<sequence length="737" mass="81449">MLKYALHSGGMPRNRLLRQLSAHIFRRSYSSNIRNIGILAHIDAGKTTTTERMLFYSGKTRSLGEVHRGNTVTDYLTQERERGITICSSAVTFPWRGNRINLLDTPGHIDFTMEVEQSLYAVDGVVVVLDGTAGVEAQTVTVWTQADKHKLPRLAFVNKMDRPDADFDKCVNDLRTKLETQPVCIQYPSKNQDGLLTINDVITLEQLTWQPKDLGRSYSKTKLEPSDDLRQLQEKRNELIDQLSGLDDELADVVISTESFDNVSNALIERALRRATCQQKVVPVLLGSAYKNVGIQRLMDAVNTYLPAPEERNQIYDCFGNEVAGKVFKIVHDKQRGPLTLVRILRGEIKRGMRLICSRGQAEVVSKLYEPLADEYREVGAVQSGDVVICAGLKSTVTGDLLTSSQTALRNAQKRLKQSQGTVSPDEDEELDTDELFGIDRQIPDAVYFCSIEPPSVSSQTAMEQALRQLQREDPSLRVSYDSVTGQTVLGGMGELHMDIIKSRILSEYKIDVDLGPLQIAYKETIESPSLTTLSVEKEIAGSKQNVSLTLEVVKDQGELFSLDKSPENLSNLNTLRPRTLQVIRKGSVSALERGPRVGGQVVDTQIRLHNAIIGRGTADSFVMATAAQCVQKLLSTSGTRLLEPIMALQIVAPSERISGIMADLSRRRALINDVLPKGERNKMILVNAPLAELSGYSSALRTISSGTASMTMQPSGFSGMNAVDESLAERRVQGLE</sequence>
<comment type="function">
    <text evidence="2">Mitochondrial GTPase that mediates the disassembly of ribosomes from messenger RNA at the termination of mitochondrial protein biosynthesis. Not involved in the GTP-dependent ribosomal translocation step during translation elongation.</text>
</comment>
<comment type="subcellular location">
    <subcellularLocation>
        <location evidence="2">Mitochondrion</location>
    </subcellularLocation>
</comment>
<comment type="similarity">
    <text evidence="2">Belongs to the TRAFAC class translation factor GTPase superfamily. Classic translation factor GTPase family. EF-G/EF-2 subfamily.</text>
</comment>
<organism>
    <name type="scientific">Drosophila pseudoobscura pseudoobscura</name>
    <name type="common">Fruit fly</name>
    <dbReference type="NCBI Taxonomy" id="46245"/>
    <lineage>
        <taxon>Eukaryota</taxon>
        <taxon>Metazoa</taxon>
        <taxon>Ecdysozoa</taxon>
        <taxon>Arthropoda</taxon>
        <taxon>Hexapoda</taxon>
        <taxon>Insecta</taxon>
        <taxon>Pterygota</taxon>
        <taxon>Neoptera</taxon>
        <taxon>Endopterygota</taxon>
        <taxon>Diptera</taxon>
        <taxon>Brachycera</taxon>
        <taxon>Muscomorpha</taxon>
        <taxon>Ephydroidea</taxon>
        <taxon>Drosophilidae</taxon>
        <taxon>Drosophila</taxon>
        <taxon>Sophophora</taxon>
    </lineage>
</organism>
<proteinExistence type="inferred from homology"/>
<keyword id="KW-0342">GTP-binding</keyword>
<keyword id="KW-0496">Mitochondrion</keyword>
<keyword id="KW-0547">Nucleotide-binding</keyword>
<keyword id="KW-0648">Protein biosynthesis</keyword>
<keyword id="KW-1185">Reference proteome</keyword>
<keyword id="KW-0809">Transit peptide</keyword>
<evidence type="ECO:0000250" key="1">
    <source>
        <dbReference type="UniProtKB" id="Q9VCX4"/>
    </source>
</evidence>
<evidence type="ECO:0000255" key="2">
    <source>
        <dbReference type="HAMAP-Rule" id="MF_03059"/>
    </source>
</evidence>
<feature type="transit peptide" description="Mitochondrion" evidence="2">
    <location>
        <begin position="1"/>
        <end position="29"/>
    </location>
</feature>
<feature type="chain" id="PRO_0000385603" description="Ribosome-releasing factor 2, mitochondrial">
    <location>
        <begin position="30"/>
        <end position="737"/>
    </location>
</feature>
<feature type="domain" description="tr-type G">
    <location>
        <begin position="31"/>
        <end position="310"/>
    </location>
</feature>
<feature type="binding site" evidence="2">
    <location>
        <begin position="40"/>
        <end position="47"/>
    </location>
    <ligand>
        <name>GTP</name>
        <dbReference type="ChEBI" id="CHEBI:37565"/>
    </ligand>
</feature>
<feature type="binding site" evidence="2">
    <location>
        <begin position="104"/>
        <end position="108"/>
    </location>
    <ligand>
        <name>GTP</name>
        <dbReference type="ChEBI" id="CHEBI:37565"/>
    </ligand>
</feature>
<feature type="binding site" evidence="2">
    <location>
        <begin position="158"/>
        <end position="161"/>
    </location>
    <ligand>
        <name>GTP</name>
        <dbReference type="ChEBI" id="CHEBI:37565"/>
    </ligand>
</feature>
<name>RRF2M_DROPS</name>
<dbReference type="EMBL" id="CM000070">
    <property type="protein sequence ID" value="EAL27063.2"/>
    <property type="molecule type" value="Genomic_DNA"/>
</dbReference>
<dbReference type="SMR" id="Q29BD5"/>
<dbReference type="FunCoup" id="Q29BD5">
    <property type="interactions" value="499"/>
</dbReference>
<dbReference type="STRING" id="46245.Q29BD5"/>
<dbReference type="eggNOG" id="KOG0464">
    <property type="taxonomic scope" value="Eukaryota"/>
</dbReference>
<dbReference type="HOGENOM" id="CLU_002794_4_1_1"/>
<dbReference type="InParanoid" id="Q29BD5"/>
<dbReference type="OMA" id="GPQFTFP"/>
<dbReference type="Proteomes" id="UP000001819">
    <property type="component" value="Unplaced"/>
</dbReference>
<dbReference type="GO" id="GO:0005739">
    <property type="term" value="C:mitochondrion"/>
    <property type="evidence" value="ECO:0007669"/>
    <property type="project" value="UniProtKB-SubCell"/>
</dbReference>
<dbReference type="GO" id="GO:0005525">
    <property type="term" value="F:GTP binding"/>
    <property type="evidence" value="ECO:0007669"/>
    <property type="project" value="UniProtKB-UniRule"/>
</dbReference>
<dbReference type="GO" id="GO:0003924">
    <property type="term" value="F:GTPase activity"/>
    <property type="evidence" value="ECO:0000250"/>
    <property type="project" value="UniProtKB"/>
</dbReference>
<dbReference type="GO" id="GO:0032543">
    <property type="term" value="P:mitochondrial translation"/>
    <property type="evidence" value="ECO:0000250"/>
    <property type="project" value="UniProtKB"/>
</dbReference>
<dbReference type="GO" id="GO:0032790">
    <property type="term" value="P:ribosome disassembly"/>
    <property type="evidence" value="ECO:0000250"/>
    <property type="project" value="UniProtKB"/>
</dbReference>
<dbReference type="CDD" id="cd16262">
    <property type="entry name" value="EFG_III"/>
    <property type="match status" value="1"/>
</dbReference>
<dbReference type="CDD" id="cd03713">
    <property type="entry name" value="EFG_mtEFG_C"/>
    <property type="match status" value="1"/>
</dbReference>
<dbReference type="FunFam" id="3.30.70.240:FF:000001">
    <property type="entry name" value="Elongation factor G"/>
    <property type="match status" value="1"/>
</dbReference>
<dbReference type="FunFam" id="2.40.30.10:FF:000203">
    <property type="entry name" value="Ribosome-releasing factor 2, mitochondrial"/>
    <property type="match status" value="1"/>
</dbReference>
<dbReference type="FunFam" id="3.30.230.10:FF:000033">
    <property type="entry name" value="Ribosome-releasing factor 2, mitochondrial"/>
    <property type="match status" value="1"/>
</dbReference>
<dbReference type="FunFam" id="3.30.70.870:FF:000005">
    <property type="entry name" value="Ribosome-releasing factor 2, mitochondrial"/>
    <property type="match status" value="1"/>
</dbReference>
<dbReference type="FunFam" id="3.40.50.300:FF:000514">
    <property type="entry name" value="Ribosome-releasing factor 2, mitochondrial"/>
    <property type="match status" value="1"/>
</dbReference>
<dbReference type="Gene3D" id="3.30.230.10">
    <property type="match status" value="1"/>
</dbReference>
<dbReference type="Gene3D" id="3.30.70.240">
    <property type="match status" value="1"/>
</dbReference>
<dbReference type="Gene3D" id="3.30.70.870">
    <property type="entry name" value="Elongation Factor G (Translational Gtpase), domain 3"/>
    <property type="match status" value="1"/>
</dbReference>
<dbReference type="Gene3D" id="3.40.50.300">
    <property type="entry name" value="P-loop containing nucleotide triphosphate hydrolases"/>
    <property type="match status" value="1"/>
</dbReference>
<dbReference type="Gene3D" id="2.40.30.10">
    <property type="entry name" value="Translation factors"/>
    <property type="match status" value="1"/>
</dbReference>
<dbReference type="HAMAP" id="MF_03059">
    <property type="entry name" value="mEF_G_2"/>
    <property type="match status" value="1"/>
</dbReference>
<dbReference type="InterPro" id="IPR053905">
    <property type="entry name" value="EF-G-like_DII"/>
</dbReference>
<dbReference type="InterPro" id="IPR030851">
    <property type="entry name" value="EFG2"/>
</dbReference>
<dbReference type="InterPro" id="IPR041095">
    <property type="entry name" value="EFG_II"/>
</dbReference>
<dbReference type="InterPro" id="IPR009022">
    <property type="entry name" value="EFG_III"/>
</dbReference>
<dbReference type="InterPro" id="IPR035647">
    <property type="entry name" value="EFG_III/V"/>
</dbReference>
<dbReference type="InterPro" id="IPR035649">
    <property type="entry name" value="EFG_V"/>
</dbReference>
<dbReference type="InterPro" id="IPR000640">
    <property type="entry name" value="EFG_V-like"/>
</dbReference>
<dbReference type="InterPro" id="IPR031157">
    <property type="entry name" value="G_TR_CS"/>
</dbReference>
<dbReference type="InterPro" id="IPR027417">
    <property type="entry name" value="P-loop_NTPase"/>
</dbReference>
<dbReference type="InterPro" id="IPR020568">
    <property type="entry name" value="Ribosomal_Su5_D2-typ_SF"/>
</dbReference>
<dbReference type="InterPro" id="IPR014721">
    <property type="entry name" value="Ribsml_uS5_D2-typ_fold_subgr"/>
</dbReference>
<dbReference type="InterPro" id="IPR005225">
    <property type="entry name" value="Small_GTP-bd"/>
</dbReference>
<dbReference type="InterPro" id="IPR000795">
    <property type="entry name" value="T_Tr_GTP-bd_dom"/>
</dbReference>
<dbReference type="InterPro" id="IPR009000">
    <property type="entry name" value="Transl_B-barrel_sf"/>
</dbReference>
<dbReference type="NCBIfam" id="TIGR00231">
    <property type="entry name" value="small_GTP"/>
    <property type="match status" value="1"/>
</dbReference>
<dbReference type="PANTHER" id="PTHR43261:SF1">
    <property type="entry name" value="RIBOSOME-RELEASING FACTOR 2, MITOCHONDRIAL"/>
    <property type="match status" value="1"/>
</dbReference>
<dbReference type="PANTHER" id="PTHR43261">
    <property type="entry name" value="TRANSLATION ELONGATION FACTOR G-RELATED"/>
    <property type="match status" value="1"/>
</dbReference>
<dbReference type="Pfam" id="PF22042">
    <property type="entry name" value="EF-G_D2"/>
    <property type="match status" value="1"/>
</dbReference>
<dbReference type="Pfam" id="PF00679">
    <property type="entry name" value="EFG_C"/>
    <property type="match status" value="1"/>
</dbReference>
<dbReference type="Pfam" id="PF14492">
    <property type="entry name" value="EFG_III"/>
    <property type="match status" value="1"/>
</dbReference>
<dbReference type="Pfam" id="PF00009">
    <property type="entry name" value="GTP_EFTU"/>
    <property type="match status" value="1"/>
</dbReference>
<dbReference type="PRINTS" id="PR00315">
    <property type="entry name" value="ELONGATNFCT"/>
</dbReference>
<dbReference type="SMART" id="SM00838">
    <property type="entry name" value="EFG_C"/>
    <property type="match status" value="1"/>
</dbReference>
<dbReference type="SUPFAM" id="SSF54980">
    <property type="entry name" value="EF-G C-terminal domain-like"/>
    <property type="match status" value="2"/>
</dbReference>
<dbReference type="SUPFAM" id="SSF52540">
    <property type="entry name" value="P-loop containing nucleoside triphosphate hydrolases"/>
    <property type="match status" value="1"/>
</dbReference>
<dbReference type="SUPFAM" id="SSF54211">
    <property type="entry name" value="Ribosomal protein S5 domain 2-like"/>
    <property type="match status" value="1"/>
</dbReference>
<dbReference type="SUPFAM" id="SSF50447">
    <property type="entry name" value="Translation proteins"/>
    <property type="match status" value="1"/>
</dbReference>
<dbReference type="PROSITE" id="PS00301">
    <property type="entry name" value="G_TR_1"/>
    <property type="match status" value="1"/>
</dbReference>
<dbReference type="PROSITE" id="PS51722">
    <property type="entry name" value="G_TR_2"/>
    <property type="match status" value="1"/>
</dbReference>
<reference key="1">
    <citation type="journal article" date="2005" name="Genome Res.">
        <title>Comparative genome sequencing of Drosophila pseudoobscura: chromosomal, gene, and cis-element evolution.</title>
        <authorList>
            <person name="Richards S."/>
            <person name="Liu Y."/>
            <person name="Bettencourt B.R."/>
            <person name="Hradecky P."/>
            <person name="Letovsky S."/>
            <person name="Nielsen R."/>
            <person name="Thornton K."/>
            <person name="Hubisz M.J."/>
            <person name="Chen R."/>
            <person name="Meisel R.P."/>
            <person name="Couronne O."/>
            <person name="Hua S."/>
            <person name="Smith M.A."/>
            <person name="Zhang P."/>
            <person name="Liu J."/>
            <person name="Bussemaker H.J."/>
            <person name="van Batenburg M.F."/>
            <person name="Howells S.L."/>
            <person name="Scherer S.E."/>
            <person name="Sodergren E."/>
            <person name="Matthews B.B."/>
            <person name="Crosby M.A."/>
            <person name="Schroeder A.J."/>
            <person name="Ortiz-Barrientos D."/>
            <person name="Rives C.M."/>
            <person name="Metzker M.L."/>
            <person name="Muzny D.M."/>
            <person name="Scott G."/>
            <person name="Steffen D."/>
            <person name="Wheeler D.A."/>
            <person name="Worley K.C."/>
            <person name="Havlak P."/>
            <person name="Durbin K.J."/>
            <person name="Egan A."/>
            <person name="Gill R."/>
            <person name="Hume J."/>
            <person name="Morgan M.B."/>
            <person name="Miner G."/>
            <person name="Hamilton C."/>
            <person name="Huang Y."/>
            <person name="Waldron L."/>
            <person name="Verduzco D."/>
            <person name="Clerc-Blankenburg K.P."/>
            <person name="Dubchak I."/>
            <person name="Noor M.A.F."/>
            <person name="Anderson W."/>
            <person name="White K.P."/>
            <person name="Clark A.G."/>
            <person name="Schaeffer S.W."/>
            <person name="Gelbart W.M."/>
            <person name="Weinstock G.M."/>
            <person name="Gibbs R.A."/>
        </authorList>
    </citation>
    <scope>NUCLEOTIDE SEQUENCE [LARGE SCALE GENOMIC DNA]</scope>
    <source>
        <strain>MV2-25 / Tucson 14011-0121.94</strain>
    </source>
</reference>
<protein>
    <recommendedName>
        <fullName evidence="2">Ribosome-releasing factor 2, mitochondrial</fullName>
        <shortName evidence="2">RRF2mt</shortName>
    </recommendedName>
    <alternativeName>
        <fullName evidence="2">Elongation factor G 2, mitochondrial</fullName>
        <shortName evidence="2">EF-G2mt</shortName>
        <shortName evidence="2">mEF-G 2</shortName>
    </alternativeName>
</protein>